<protein>
    <recommendedName>
        <fullName>Mannan polymerase complex subunit MNN9</fullName>
    </recommendedName>
</protein>
<reference key="1">
    <citation type="journal article" date="1999" name="J. Bacteriol.">
        <title>Molecular analysis of the Candida albicans homolog of Saccharomyces cerevisiae MNN9, required for glycosylation of cell wall mannoproteins.</title>
        <authorList>
            <person name="Southard S.B."/>
            <person name="Specht C.A."/>
            <person name="Mishra C."/>
            <person name="Chen-Weiner J."/>
            <person name="Robbins P.W."/>
        </authorList>
    </citation>
    <scope>NUCLEOTIDE SEQUENCE [GENOMIC DNA]</scope>
    <source>
        <strain>ATCC 10261 / CBS 2718 / NBRC 1061</strain>
    </source>
</reference>
<reference key="2">
    <citation type="journal article" date="2004" name="Proc. Natl. Acad. Sci. U.S.A.">
        <title>The diploid genome sequence of Candida albicans.</title>
        <authorList>
            <person name="Jones T."/>
            <person name="Federspiel N.A."/>
            <person name="Chibana H."/>
            <person name="Dungan J."/>
            <person name="Kalman S."/>
            <person name="Magee B.B."/>
            <person name="Newport G."/>
            <person name="Thorstenson Y.R."/>
            <person name="Agabian N."/>
            <person name="Magee P.T."/>
            <person name="Davis R.W."/>
            <person name="Scherer S."/>
        </authorList>
    </citation>
    <scope>NUCLEOTIDE SEQUENCE [LARGE SCALE GENOMIC DNA]</scope>
    <source>
        <strain>SC5314 / ATCC MYA-2876</strain>
    </source>
</reference>
<reference key="3">
    <citation type="journal article" date="2007" name="Genome Biol.">
        <title>Assembly of the Candida albicans genome into sixteen supercontigs aligned on the eight chromosomes.</title>
        <authorList>
            <person name="van het Hoog M."/>
            <person name="Rast T.J."/>
            <person name="Martchenko M."/>
            <person name="Grindle S."/>
            <person name="Dignard D."/>
            <person name="Hogues H."/>
            <person name="Cuomo C."/>
            <person name="Berriman M."/>
            <person name="Scherer S."/>
            <person name="Magee B.B."/>
            <person name="Whiteway M."/>
            <person name="Chibana H."/>
            <person name="Nantel A."/>
            <person name="Magee P.T."/>
        </authorList>
    </citation>
    <scope>GENOME REANNOTATION</scope>
    <source>
        <strain>SC5314 / ATCC MYA-2876</strain>
    </source>
</reference>
<reference key="4">
    <citation type="journal article" date="2013" name="Genome Biol.">
        <title>Assembly of a phased diploid Candida albicans genome facilitates allele-specific measurements and provides a simple model for repeat and indel structure.</title>
        <authorList>
            <person name="Muzzey D."/>
            <person name="Schwartz K."/>
            <person name="Weissman J.S."/>
            <person name="Sherlock G."/>
        </authorList>
    </citation>
    <scope>NUCLEOTIDE SEQUENCE [LARGE SCALE GENOMIC DNA]</scope>
    <scope>GENOME REANNOTATION</scope>
    <source>
        <strain>SC5314 / ATCC MYA-2876</strain>
    </source>
</reference>
<accession>P53697</accession>
<accession>A0A1D8PKF7</accession>
<accession>Q5A4F1</accession>
<comment type="function">
    <text>Required for the addition of the long alpha 1,6-mannose backbone of N-linked glycans on cell wall and periplasmic proteins.</text>
</comment>
<comment type="pathway">
    <text>Protein modification; protein glycosylation.</text>
</comment>
<comment type="subcellular location">
    <subcellularLocation>
        <location evidence="1">Golgi apparatus membrane</location>
        <topology evidence="1">Single-pass type II membrane protein</topology>
    </subcellularLocation>
</comment>
<comment type="similarity">
    <text evidence="3">Belongs to the ANP1/MMN9/VAN1 family.</text>
</comment>
<feature type="chain" id="PRO_0000193669" description="Mannan polymerase complex subunit MNN9">
    <location>
        <begin position="1"/>
        <end position="368"/>
    </location>
</feature>
<feature type="topological domain" description="Cytoplasmic" evidence="2">
    <location>
        <begin position="1"/>
        <end position="15"/>
    </location>
</feature>
<feature type="transmembrane region" description="Helical; Signal-anchor for type II membrane protein">
    <location>
        <begin position="16"/>
        <end position="33"/>
    </location>
</feature>
<feature type="topological domain" description="Lumenal" evidence="2">
    <location>
        <begin position="34"/>
        <end position="368"/>
    </location>
</feature>
<organism>
    <name type="scientific">Candida albicans (strain SC5314 / ATCC MYA-2876)</name>
    <name type="common">Yeast</name>
    <dbReference type="NCBI Taxonomy" id="237561"/>
    <lineage>
        <taxon>Eukaryota</taxon>
        <taxon>Fungi</taxon>
        <taxon>Dikarya</taxon>
        <taxon>Ascomycota</taxon>
        <taxon>Saccharomycotina</taxon>
        <taxon>Pichiomycetes</taxon>
        <taxon>Debaryomycetaceae</taxon>
        <taxon>Candida/Lodderomyces clade</taxon>
        <taxon>Candida</taxon>
    </lineage>
</organism>
<proteinExistence type="inferred from homology"/>
<evidence type="ECO:0000250" key="1">
    <source>
        <dbReference type="UniProtKB" id="P39107"/>
    </source>
</evidence>
<evidence type="ECO:0000255" key="2"/>
<evidence type="ECO:0000305" key="3"/>
<name>MNN9_CANAL</name>
<sequence length="368" mass="42782">MVHYRNRYLNYIRRKPLALLAPITLLVVIYFYFFSAHGFSSNKQKYNYNKKSRGWFYKNRDTVILKDLPKNHISHYDLNKLTASKDALNKREEVLILTPMSKFLPEYWENINKLTYDHSLISLGFIFPRTTQGDDALKELENALKKTKREKRLNFKKITILRQDSNSLQSQLEKDRHAFKVQKERRSMMALARNSLVFSTILPSTSWVLWLDADIVETPVTLIQDLTGHNKPVVSANVHQRFINQDTKQPDIRPYDFNNWVESEEGLKLAASLPDDEIIVEGYSEMVTHRALMAHFYDPKGDPSTEMTLDGVGGGAVMVKADVHRDGAMFPSFPFYHLIETEGFAKMAKRLGYEVYGLPNYLVFHYNE</sequence>
<gene>
    <name type="primary">MNN9</name>
    <name type="ordered locus">CAALFM_C306020WA</name>
    <name type="ORF">CaO19.7383</name>
</gene>
<keyword id="KW-0333">Golgi apparatus</keyword>
<keyword id="KW-0472">Membrane</keyword>
<keyword id="KW-1185">Reference proteome</keyword>
<keyword id="KW-0735">Signal-anchor</keyword>
<keyword id="KW-0812">Transmembrane</keyword>
<keyword id="KW-1133">Transmembrane helix</keyword>
<dbReference type="EMBL" id="U63642">
    <property type="protein sequence ID" value="AAB05924.1"/>
    <property type="molecule type" value="Genomic_DNA"/>
</dbReference>
<dbReference type="EMBL" id="CP017625">
    <property type="protein sequence ID" value="AOW28610.1"/>
    <property type="molecule type" value="Genomic_DNA"/>
</dbReference>
<dbReference type="RefSeq" id="XP_716624.1">
    <property type="nucleotide sequence ID" value="XM_711531.1"/>
</dbReference>
<dbReference type="SMR" id="P53697"/>
<dbReference type="BioGRID" id="1224829">
    <property type="interactions" value="1"/>
</dbReference>
<dbReference type="FunCoup" id="P53697">
    <property type="interactions" value="121"/>
</dbReference>
<dbReference type="STRING" id="237561.P53697"/>
<dbReference type="CAZy" id="GT62">
    <property type="family name" value="Glycosyltransferase Family 62"/>
</dbReference>
<dbReference type="EnsemblFungi" id="C3_06020W_A-T">
    <property type="protein sequence ID" value="C3_06020W_A-T-p1"/>
    <property type="gene ID" value="C3_06020W_A"/>
</dbReference>
<dbReference type="GeneID" id="3641735"/>
<dbReference type="KEGG" id="cal:CAALFM_C306020WA"/>
<dbReference type="CGD" id="CAL0000179486">
    <property type="gene designation" value="MNN9"/>
</dbReference>
<dbReference type="VEuPathDB" id="FungiDB:C3_06020W_A"/>
<dbReference type="eggNOG" id="ENOG502QRPX">
    <property type="taxonomic scope" value="Eukaryota"/>
</dbReference>
<dbReference type="HOGENOM" id="CLU_017872_4_0_1"/>
<dbReference type="InParanoid" id="P53697"/>
<dbReference type="OMA" id="IPKTREG"/>
<dbReference type="OrthoDB" id="2405412at2759"/>
<dbReference type="UniPathway" id="UPA00378"/>
<dbReference type="Proteomes" id="UP000000559">
    <property type="component" value="Chromosome 3"/>
</dbReference>
<dbReference type="GO" id="GO:0005801">
    <property type="term" value="C:cis-Golgi network"/>
    <property type="evidence" value="ECO:0007669"/>
    <property type="project" value="EnsemblFungi"/>
</dbReference>
<dbReference type="GO" id="GO:0000136">
    <property type="term" value="C:mannan polymerase complex"/>
    <property type="evidence" value="ECO:0000318"/>
    <property type="project" value="GO_Central"/>
</dbReference>
<dbReference type="GO" id="GO:0140497">
    <property type="term" value="C:mannan polymerase II complex"/>
    <property type="evidence" value="ECO:0007669"/>
    <property type="project" value="EnsemblFungi"/>
</dbReference>
<dbReference type="GO" id="GO:0000009">
    <property type="term" value="F:alpha-1,6-mannosyltransferase activity"/>
    <property type="evidence" value="ECO:0007669"/>
    <property type="project" value="EnsemblFungi"/>
</dbReference>
<dbReference type="GO" id="GO:0000030">
    <property type="term" value="F:mannosyltransferase activity"/>
    <property type="evidence" value="ECO:0000315"/>
    <property type="project" value="CGD"/>
</dbReference>
<dbReference type="GO" id="GO:0000032">
    <property type="term" value="P:cell wall mannoprotein biosynthetic process"/>
    <property type="evidence" value="ECO:0000315"/>
    <property type="project" value="CGD"/>
</dbReference>
<dbReference type="GO" id="GO:0034605">
    <property type="term" value="P:cellular response to heat"/>
    <property type="evidence" value="ECO:0000315"/>
    <property type="project" value="CGD"/>
</dbReference>
<dbReference type="GO" id="GO:0030447">
    <property type="term" value="P:filamentous growth"/>
    <property type="evidence" value="ECO:0000315"/>
    <property type="project" value="CGD"/>
</dbReference>
<dbReference type="GO" id="GO:0036180">
    <property type="term" value="P:filamentous growth of a population of unicellular organisms in response to biotic stimulus"/>
    <property type="evidence" value="ECO:0000315"/>
    <property type="project" value="CGD"/>
</dbReference>
<dbReference type="GO" id="GO:0036168">
    <property type="term" value="P:filamentous growth of a population of unicellular organisms in response to heat"/>
    <property type="evidence" value="ECO:0000315"/>
    <property type="project" value="CGD"/>
</dbReference>
<dbReference type="GO" id="GO:0031505">
    <property type="term" value="P:fungal-type cell wall organization"/>
    <property type="evidence" value="ECO:0000315"/>
    <property type="project" value="CGD"/>
</dbReference>
<dbReference type="GO" id="GO:0006487">
    <property type="term" value="P:protein N-linked glycosylation"/>
    <property type="evidence" value="ECO:0000318"/>
    <property type="project" value="GO_Central"/>
</dbReference>
<dbReference type="GO" id="GO:0018279">
    <property type="term" value="P:protein N-linked glycosylation via asparagine"/>
    <property type="evidence" value="ECO:0007669"/>
    <property type="project" value="EnsemblFungi"/>
</dbReference>
<dbReference type="FunFam" id="3.90.550.10:FF:000017">
    <property type="entry name" value="Mannan polymerase II complex ANP1 subunit"/>
    <property type="match status" value="1"/>
</dbReference>
<dbReference type="Gene3D" id="3.90.550.10">
    <property type="entry name" value="Spore Coat Polysaccharide Biosynthesis Protein SpsA, Chain A"/>
    <property type="match status" value="1"/>
</dbReference>
<dbReference type="InterPro" id="IPR052086">
    <property type="entry name" value="Mannan_Polymerase_Subunit"/>
</dbReference>
<dbReference type="InterPro" id="IPR029044">
    <property type="entry name" value="Nucleotide-diphossugar_trans"/>
</dbReference>
<dbReference type="PANTHER" id="PTHR43083:SF6">
    <property type="entry name" value="MANNAN POLYMERASE COMPLEXES SUBUNIT MNN9"/>
    <property type="match status" value="1"/>
</dbReference>
<dbReference type="PANTHER" id="PTHR43083">
    <property type="entry name" value="MANNAN POLYMERASE II"/>
    <property type="match status" value="1"/>
</dbReference>
<dbReference type="Pfam" id="PF03452">
    <property type="entry name" value="Anp1"/>
    <property type="match status" value="1"/>
</dbReference>
<dbReference type="SUPFAM" id="SSF53448">
    <property type="entry name" value="Nucleotide-diphospho-sugar transferases"/>
    <property type="match status" value="1"/>
</dbReference>